<name>KTHY_ACIAD</name>
<keyword id="KW-0067">ATP-binding</keyword>
<keyword id="KW-0418">Kinase</keyword>
<keyword id="KW-0545">Nucleotide biosynthesis</keyword>
<keyword id="KW-0547">Nucleotide-binding</keyword>
<keyword id="KW-0808">Transferase</keyword>
<proteinExistence type="inferred from homology"/>
<dbReference type="EC" id="2.7.4.9" evidence="1"/>
<dbReference type="EMBL" id="CR543861">
    <property type="protein sequence ID" value="CAG69350.1"/>
    <property type="molecule type" value="Genomic_DNA"/>
</dbReference>
<dbReference type="RefSeq" id="WP_004928742.1">
    <property type="nucleotide sequence ID" value="NC_005966.1"/>
</dbReference>
<dbReference type="SMR" id="Q6F9B5"/>
<dbReference type="STRING" id="202950.GCA_001485005_01430"/>
<dbReference type="GeneID" id="45234871"/>
<dbReference type="KEGG" id="aci:ACIAD2588"/>
<dbReference type="eggNOG" id="COG0125">
    <property type="taxonomic scope" value="Bacteria"/>
</dbReference>
<dbReference type="HOGENOM" id="CLU_049131_0_2_6"/>
<dbReference type="OrthoDB" id="9774907at2"/>
<dbReference type="BioCyc" id="ASP62977:ACIAD_RS11770-MONOMER"/>
<dbReference type="Proteomes" id="UP000000430">
    <property type="component" value="Chromosome"/>
</dbReference>
<dbReference type="GO" id="GO:0005829">
    <property type="term" value="C:cytosol"/>
    <property type="evidence" value="ECO:0007669"/>
    <property type="project" value="TreeGrafter"/>
</dbReference>
<dbReference type="GO" id="GO:0005524">
    <property type="term" value="F:ATP binding"/>
    <property type="evidence" value="ECO:0007669"/>
    <property type="project" value="UniProtKB-UniRule"/>
</dbReference>
<dbReference type="GO" id="GO:0004798">
    <property type="term" value="F:dTMP kinase activity"/>
    <property type="evidence" value="ECO:0007669"/>
    <property type="project" value="UniProtKB-UniRule"/>
</dbReference>
<dbReference type="GO" id="GO:0006233">
    <property type="term" value="P:dTDP biosynthetic process"/>
    <property type="evidence" value="ECO:0007669"/>
    <property type="project" value="InterPro"/>
</dbReference>
<dbReference type="GO" id="GO:0006235">
    <property type="term" value="P:dTTP biosynthetic process"/>
    <property type="evidence" value="ECO:0007669"/>
    <property type="project" value="UniProtKB-UniRule"/>
</dbReference>
<dbReference type="GO" id="GO:0006227">
    <property type="term" value="P:dUDP biosynthetic process"/>
    <property type="evidence" value="ECO:0007669"/>
    <property type="project" value="TreeGrafter"/>
</dbReference>
<dbReference type="CDD" id="cd01672">
    <property type="entry name" value="TMPK"/>
    <property type="match status" value="1"/>
</dbReference>
<dbReference type="FunFam" id="3.40.50.300:FF:000225">
    <property type="entry name" value="Thymidylate kinase"/>
    <property type="match status" value="1"/>
</dbReference>
<dbReference type="Gene3D" id="3.40.50.300">
    <property type="entry name" value="P-loop containing nucleotide triphosphate hydrolases"/>
    <property type="match status" value="1"/>
</dbReference>
<dbReference type="HAMAP" id="MF_00165">
    <property type="entry name" value="Thymidylate_kinase"/>
    <property type="match status" value="1"/>
</dbReference>
<dbReference type="InterPro" id="IPR027417">
    <property type="entry name" value="P-loop_NTPase"/>
</dbReference>
<dbReference type="InterPro" id="IPR039430">
    <property type="entry name" value="Thymidylate_kin-like_dom"/>
</dbReference>
<dbReference type="InterPro" id="IPR018094">
    <property type="entry name" value="Thymidylate_kinase"/>
</dbReference>
<dbReference type="NCBIfam" id="TIGR00041">
    <property type="entry name" value="DTMP_kinase"/>
    <property type="match status" value="1"/>
</dbReference>
<dbReference type="PANTHER" id="PTHR10344">
    <property type="entry name" value="THYMIDYLATE KINASE"/>
    <property type="match status" value="1"/>
</dbReference>
<dbReference type="PANTHER" id="PTHR10344:SF4">
    <property type="entry name" value="UMP-CMP KINASE 2, MITOCHONDRIAL"/>
    <property type="match status" value="1"/>
</dbReference>
<dbReference type="Pfam" id="PF02223">
    <property type="entry name" value="Thymidylate_kin"/>
    <property type="match status" value="1"/>
</dbReference>
<dbReference type="SUPFAM" id="SSF52540">
    <property type="entry name" value="P-loop containing nucleoside triphosphate hydrolases"/>
    <property type="match status" value="1"/>
</dbReference>
<comment type="function">
    <text evidence="1">Phosphorylation of dTMP to form dTDP in both de novo and salvage pathways of dTTP synthesis.</text>
</comment>
<comment type="catalytic activity">
    <reaction evidence="1">
        <text>dTMP + ATP = dTDP + ADP</text>
        <dbReference type="Rhea" id="RHEA:13517"/>
        <dbReference type="ChEBI" id="CHEBI:30616"/>
        <dbReference type="ChEBI" id="CHEBI:58369"/>
        <dbReference type="ChEBI" id="CHEBI:63528"/>
        <dbReference type="ChEBI" id="CHEBI:456216"/>
        <dbReference type="EC" id="2.7.4.9"/>
    </reaction>
</comment>
<comment type="similarity">
    <text evidence="1">Belongs to the thymidylate kinase family.</text>
</comment>
<accession>Q6F9B5</accession>
<protein>
    <recommendedName>
        <fullName evidence="1">Thymidylate kinase</fullName>
        <ecNumber evidence="1">2.7.4.9</ecNumber>
    </recommendedName>
    <alternativeName>
        <fullName evidence="1">dTMP kinase</fullName>
    </alternativeName>
</protein>
<reference key="1">
    <citation type="journal article" date="2004" name="Nucleic Acids Res.">
        <title>Unique features revealed by the genome sequence of Acinetobacter sp. ADP1, a versatile and naturally transformation competent bacterium.</title>
        <authorList>
            <person name="Barbe V."/>
            <person name="Vallenet D."/>
            <person name="Fonknechten N."/>
            <person name="Kreimeyer A."/>
            <person name="Oztas S."/>
            <person name="Labarre L."/>
            <person name="Cruveiller S."/>
            <person name="Robert C."/>
            <person name="Duprat S."/>
            <person name="Wincker P."/>
            <person name="Ornston L.N."/>
            <person name="Weissenbach J."/>
            <person name="Marliere P."/>
            <person name="Cohen G.N."/>
            <person name="Medigue C."/>
        </authorList>
    </citation>
    <scope>NUCLEOTIDE SEQUENCE [LARGE SCALE GENOMIC DNA]</scope>
    <source>
        <strain>ATCC 33305 / BD413 / ADP1</strain>
    </source>
</reference>
<sequence length="202" mass="23049">MFISFEGTEGVGKTTLIRKLYEHFEASGKQVVLTREPGGTPLAEQIRSLLLAVNHDEPMSSDTELLLMYAARAQHLQQVIVPALADEKLVLSDRFTDASYAYQCVGRGLSKDKLNTLNQTFVSHMPDITFWLDAPIELGMSRARERGALDRFEQEKVEFFQRVRQGYQQLHELYPERIKRLDATQAPEIVFQEALEHIQALV</sequence>
<organism>
    <name type="scientific">Acinetobacter baylyi (strain ATCC 33305 / BD413 / ADP1)</name>
    <dbReference type="NCBI Taxonomy" id="62977"/>
    <lineage>
        <taxon>Bacteria</taxon>
        <taxon>Pseudomonadati</taxon>
        <taxon>Pseudomonadota</taxon>
        <taxon>Gammaproteobacteria</taxon>
        <taxon>Moraxellales</taxon>
        <taxon>Moraxellaceae</taxon>
        <taxon>Acinetobacter</taxon>
    </lineage>
</organism>
<gene>
    <name evidence="1" type="primary">tmk</name>
    <name type="ordered locus">ACIAD2588</name>
</gene>
<evidence type="ECO:0000255" key="1">
    <source>
        <dbReference type="HAMAP-Rule" id="MF_00165"/>
    </source>
</evidence>
<feature type="chain" id="PRO_0000155227" description="Thymidylate kinase">
    <location>
        <begin position="1"/>
        <end position="202"/>
    </location>
</feature>
<feature type="binding site" evidence="1">
    <location>
        <begin position="7"/>
        <end position="14"/>
    </location>
    <ligand>
        <name>ATP</name>
        <dbReference type="ChEBI" id="CHEBI:30616"/>
    </ligand>
</feature>